<protein>
    <recommendedName>
        <fullName>Carbonic anhydrase</fullName>
        <ecNumber evidence="5">4.2.1.1</ecNumber>
    </recommendedName>
    <alternativeName>
        <fullName>Carbonate dehydratase</fullName>
    </alternativeName>
</protein>
<gene>
    <name evidence="7" type="primary">ccaA</name>
    <name evidence="7" type="synonym">icfA</name>
    <name type="ordered locus">slr1347</name>
</gene>
<reference key="1">
    <citation type="journal article" date="1998" name="Plant Mol. Biol.">
        <title>Cloning, characterization and expression of carbonic anhydrase from the cyanobacterium Synechocystis PCC6803.</title>
        <authorList>
            <person name="So A.K.C."/>
            <person name="Espie G.S."/>
        </authorList>
    </citation>
    <scope>NUCLEOTIDE SEQUENCE [GENOMIC DNA]</scope>
    <scope>FUNCTION</scope>
    <scope>CATALYTIC ACTIVITY</scope>
    <scope>ACTIVITY REGULATION</scope>
    <scope>SUBCELLULAR LOCATION</scope>
    <source>
        <strain>ATCC 27184 / PCC 6803 / Kazusa</strain>
    </source>
</reference>
<reference key="2">
    <citation type="journal article" date="1996" name="DNA Res.">
        <title>Sequence analysis of the genome of the unicellular cyanobacterium Synechocystis sp. strain PCC6803. II. Sequence determination of the entire genome and assignment of potential protein-coding regions.</title>
        <authorList>
            <person name="Kaneko T."/>
            <person name="Sato S."/>
            <person name="Kotani H."/>
            <person name="Tanaka A."/>
            <person name="Asamizu E."/>
            <person name="Nakamura Y."/>
            <person name="Miyajima N."/>
            <person name="Hirosawa M."/>
            <person name="Sugiura M."/>
            <person name="Sasamoto S."/>
            <person name="Kimura T."/>
            <person name="Hosouchi T."/>
            <person name="Matsuno A."/>
            <person name="Muraki A."/>
            <person name="Nakazaki N."/>
            <person name="Naruo K."/>
            <person name="Okumura S."/>
            <person name="Shimpo S."/>
            <person name="Takeuchi C."/>
            <person name="Wada T."/>
            <person name="Watanabe A."/>
            <person name="Yamada M."/>
            <person name="Yasuda M."/>
            <person name="Tabata S."/>
        </authorList>
    </citation>
    <scope>NUCLEOTIDE SEQUENCE [LARGE SCALE GENOMIC DNA]</scope>
    <source>
        <strain>ATCC 27184 / PCC 6803 / Kazusa</strain>
    </source>
</reference>
<reference key="3">
    <citation type="journal article" date="2002" name="Planta">
        <title>Characterization of a mutant lacking carboxysomal carbonic anhydrase from the cyanobacterium Synechocystis PCC6803.</title>
        <authorList>
            <person name="So A.K."/>
            <person name="John-McKay M."/>
            <person name="Espie G.S."/>
        </authorList>
    </citation>
    <scope>FUNCTION</scope>
    <scope>SUBCELLULAR LOCATION</scope>
    <scope>DISRUPTION PHENOTYPE</scope>
    <source>
        <strain>ATCC 27184 / PCC 6803 / Kazusa</strain>
    </source>
</reference>
<reference key="4">
    <citation type="journal article" date="2005" name="Can. J. Bot.">
        <title>Cyanobacterial carbonic anhydrases.</title>
        <authorList>
            <person name="So A.K."/>
            <person name="Espie G.S."/>
        </authorList>
    </citation>
    <scope>FUNCTION</scope>
</reference>
<reference key="5">
    <citation type="journal article" date="2008" name="J. Bacteriol.">
        <title>A multiprotein bicarbonate dehydration complex essential to carboxysome function in cyanobacteria.</title>
        <authorList>
            <person name="Cot S.S."/>
            <person name="So A.K."/>
            <person name="Espie G.S."/>
        </authorList>
    </citation>
    <scope>FUNCTION</scope>
    <scope>CATALYTIC ACTIVITY</scope>
    <scope>INTERACTION WITH CCMM</scope>
    <scope>SUBCELLULAR LOCATION</scope>
    <scope>DOMAIN</scope>
    <scope>MUTAGENESIS OF 215-GLN--ARG-274 AND 215-ASP--ARG-274</scope>
    <source>
        <strain>ATCC 27184 / PCC 6803 / Kazusa</strain>
    </source>
</reference>
<reference evidence="10" key="6">
    <citation type="journal article" date="2016" name="Biochem. J.">
        <title>The structure, kinetics and interactions of the beta-carboxysomal beta-carbonic anhydrase, CcaA.</title>
        <authorList>
            <person name="McGurn L.D."/>
            <person name="Moazami-Goudarzi M."/>
            <person name="White S.A."/>
            <person name="Suwal T."/>
            <person name="Brar B."/>
            <person name="Tang J.Q."/>
            <person name="Espie G.S."/>
            <person name="Kimber M.S."/>
        </authorList>
    </citation>
    <scope>X-RAY CRYSTALLOGRAPHY (1.45 ANGSTROMS) OF 1-220 IN COMPLEX WITH ZINC</scope>
    <scope>FUNCTION</scope>
    <scope>COFACTOR</scope>
    <scope>BIOPHYSICOCHEMICAL PROPERTIES</scope>
    <scope>SUBUNIT</scope>
    <scope>INTERACTION WITH CCMM</scope>
    <scope>DOMAIN</scope>
    <scope>MUTAGENESIS OF 221-PRO--ARG-274</scope>
    <source>
        <strain>ATCC 27184 / PCC 6803 / Kazusa</strain>
    </source>
</reference>
<organism>
    <name type="scientific">Synechocystis sp. (strain ATCC 27184 / PCC 6803 / Kazusa)</name>
    <dbReference type="NCBI Taxonomy" id="1111708"/>
    <lineage>
        <taxon>Bacteria</taxon>
        <taxon>Bacillati</taxon>
        <taxon>Cyanobacteriota</taxon>
        <taxon>Cyanophyceae</taxon>
        <taxon>Synechococcales</taxon>
        <taxon>Merismopediaceae</taxon>
        <taxon>Synechocystis</taxon>
    </lineage>
</organism>
<accession>Q54735</accession>
<accession>P74088</accession>
<feature type="chain" id="PRO_0000077464" description="Carbonic anhydrase">
    <location>
        <begin position="1"/>
        <end position="274"/>
    </location>
</feature>
<feature type="region of interest" description="Disordered" evidence="1">
    <location>
        <begin position="214"/>
        <end position="274"/>
    </location>
</feature>
<feature type="compositionally biased region" description="Basic and acidic residues" evidence="1">
    <location>
        <begin position="234"/>
        <end position="245"/>
    </location>
</feature>
<feature type="compositionally biased region" description="Basic and acidic residues" evidence="1">
    <location>
        <begin position="261"/>
        <end position="274"/>
    </location>
</feature>
<feature type="binding site" evidence="4 10">
    <location>
        <position position="39"/>
    </location>
    <ligand>
        <name>Zn(2+)</name>
        <dbReference type="ChEBI" id="CHEBI:29105"/>
    </ligand>
</feature>
<feature type="binding site" evidence="4 10">
    <location>
        <position position="98"/>
    </location>
    <ligand>
        <name>Zn(2+)</name>
        <dbReference type="ChEBI" id="CHEBI:29105"/>
    </ligand>
</feature>
<feature type="binding site" evidence="4 10">
    <location>
        <position position="101"/>
    </location>
    <ligand>
        <name>Zn(2+)</name>
        <dbReference type="ChEBI" id="CHEBI:29105"/>
    </ligand>
</feature>
<feature type="mutagenesis site" description="Protein has no CA activity, does not dimerize, does not interact with CcmM." evidence="3">
    <location>
        <begin position="205"/>
        <end position="274"/>
    </location>
</feature>
<feature type="mutagenesis site" description="Protein has CA activity, dimerizes and interacts with CcmM." evidence="3">
    <location>
        <begin position="215"/>
        <end position="274"/>
    </location>
</feature>
<feature type="mutagenesis site" description="10-fold increase in kcat, enzyme loses activity over 20 minutes." evidence="4">
    <location>
        <begin position="221"/>
        <end position="274"/>
    </location>
</feature>
<feature type="sequence conflict" description="In Ref. 2; BAA18166." evidence="8" ref="2">
    <original>P</original>
    <variation>L</variation>
    <location>
        <position position="219"/>
    </location>
</feature>
<feature type="helix" evidence="11">
    <location>
        <begin position="1"/>
        <end position="13"/>
    </location>
</feature>
<feature type="helix" evidence="11">
    <location>
        <begin position="15"/>
        <end position="18"/>
    </location>
</feature>
<feature type="helix" evidence="11">
    <location>
        <begin position="20"/>
        <end position="26"/>
    </location>
</feature>
<feature type="strand" evidence="11">
    <location>
        <begin position="34"/>
        <end position="39"/>
    </location>
</feature>
<feature type="helix" evidence="11">
    <location>
        <begin position="46"/>
        <end position="50"/>
    </location>
</feature>
<feature type="strand" evidence="11">
    <location>
        <begin position="56"/>
        <end position="62"/>
    </location>
</feature>
<feature type="helix" evidence="11">
    <location>
        <begin position="76"/>
        <end position="86"/>
    </location>
</feature>
<feature type="strand" evidence="11">
    <location>
        <begin position="92"/>
        <end position="98"/>
    </location>
</feature>
<feature type="helix" evidence="11">
    <location>
        <begin position="102"/>
        <end position="107"/>
    </location>
</feature>
<feature type="helix" evidence="11">
    <location>
        <begin position="110"/>
        <end position="113"/>
    </location>
</feature>
<feature type="turn" evidence="11">
    <location>
        <begin position="114"/>
        <end position="116"/>
    </location>
</feature>
<feature type="helix" evidence="11">
    <location>
        <begin position="118"/>
        <end position="124"/>
    </location>
</feature>
<feature type="helix" evidence="11">
    <location>
        <begin position="125"/>
        <end position="127"/>
    </location>
</feature>
<feature type="helix" evidence="11">
    <location>
        <begin position="128"/>
        <end position="137"/>
    </location>
</feature>
<feature type="helix" evidence="11">
    <location>
        <begin position="143"/>
        <end position="162"/>
    </location>
</feature>
<feature type="helix" evidence="11">
    <location>
        <begin position="166"/>
        <end position="174"/>
    </location>
</feature>
<feature type="strand" evidence="11">
    <location>
        <begin position="178"/>
        <end position="185"/>
    </location>
</feature>
<feature type="turn" evidence="11">
    <location>
        <begin position="186"/>
        <end position="189"/>
    </location>
</feature>
<feature type="strand" evidence="11">
    <location>
        <begin position="190"/>
        <end position="195"/>
    </location>
</feature>
<feature type="turn" evidence="11">
    <location>
        <begin position="196"/>
        <end position="199"/>
    </location>
</feature>
<feature type="strand" evidence="11">
    <location>
        <begin position="200"/>
        <end position="203"/>
    </location>
</feature>
<feature type="helix" evidence="11">
    <location>
        <begin position="213"/>
        <end position="215"/>
    </location>
</feature>
<evidence type="ECO:0000256" key="1">
    <source>
        <dbReference type="SAM" id="MobiDB-lite"/>
    </source>
</evidence>
<evidence type="ECO:0000269" key="2">
    <source>
    </source>
</evidence>
<evidence type="ECO:0000269" key="3">
    <source>
    </source>
</evidence>
<evidence type="ECO:0000269" key="4">
    <source>
    </source>
</evidence>
<evidence type="ECO:0000269" key="5">
    <source>
    </source>
</evidence>
<evidence type="ECO:0000269" key="6">
    <source ref="4"/>
</evidence>
<evidence type="ECO:0000303" key="7">
    <source>
    </source>
</evidence>
<evidence type="ECO:0000305" key="8"/>
<evidence type="ECO:0000305" key="9">
    <source>
    </source>
</evidence>
<evidence type="ECO:0007744" key="10">
    <source>
        <dbReference type="PDB" id="5SWC"/>
    </source>
</evidence>
<evidence type="ECO:0007829" key="11">
    <source>
        <dbReference type="PDB" id="5SWC"/>
    </source>
</evidence>
<sequence>MQRLIEGLQKFREGYFSSHRDLFEQLSHGQHPRILFICCSDSRVDPNLITQSEVGDLFVIRNAGNIIPPYGAANGGEGAAMEYALVALEINQIIVCGHSHCGAMKGLLKLNSLQEKLPLVYDWLKHTEATRRLVLDNYSHLEGEDLIEVAVAENILTQLKNLQTYPAIHSRLHRGDLSLHGWIYRIEEGEVLAYDGVLHDFVAPQSRINALEPEDEYAPHPNSPLISYDAFKVPGKERPGREKATESPAPQLSPLPGFGHLPREQAERIYRGSR</sequence>
<dbReference type="EC" id="4.2.1.1" evidence="5"/>
<dbReference type="EMBL" id="U45962">
    <property type="protein sequence ID" value="AAC46375.1"/>
    <property type="molecule type" value="Genomic_DNA"/>
</dbReference>
<dbReference type="EMBL" id="BA000022">
    <property type="protein sequence ID" value="BAA18166.1"/>
    <property type="status" value="ALT_INIT"/>
    <property type="molecule type" value="Genomic_DNA"/>
</dbReference>
<dbReference type="PIR" id="S75605">
    <property type="entry name" value="S75605"/>
</dbReference>
<dbReference type="PDB" id="5SWC">
    <property type="method" value="X-ray"/>
    <property type="resolution" value="1.45 A"/>
    <property type="chains" value="A/B/C/D/E/F=1-218"/>
</dbReference>
<dbReference type="PDBsum" id="5SWC"/>
<dbReference type="SMR" id="Q54735"/>
<dbReference type="DIP" id="DIP-40255N"/>
<dbReference type="IntAct" id="Q54735">
    <property type="interactions" value="5"/>
</dbReference>
<dbReference type="STRING" id="1148.gene:10499039"/>
<dbReference type="PaxDb" id="1148-1653251"/>
<dbReference type="EnsemblBacteria" id="BAA18166">
    <property type="protein sequence ID" value="BAA18166"/>
    <property type="gene ID" value="BAA18166"/>
</dbReference>
<dbReference type="KEGG" id="syn:slr1347"/>
<dbReference type="eggNOG" id="COG0288">
    <property type="taxonomic scope" value="Bacteria"/>
</dbReference>
<dbReference type="InParanoid" id="Q54735"/>
<dbReference type="PhylomeDB" id="Q54735"/>
<dbReference type="BRENDA" id="4.2.1.1">
    <property type="organism ID" value="16015"/>
</dbReference>
<dbReference type="Proteomes" id="UP000001425">
    <property type="component" value="Chromosome"/>
</dbReference>
<dbReference type="GO" id="GO:0031470">
    <property type="term" value="C:carboxysome"/>
    <property type="evidence" value="ECO:0000314"/>
    <property type="project" value="UniProtKB"/>
</dbReference>
<dbReference type="GO" id="GO:0004089">
    <property type="term" value="F:carbonate dehydratase activity"/>
    <property type="evidence" value="ECO:0000314"/>
    <property type="project" value="UniProtKB"/>
</dbReference>
<dbReference type="GO" id="GO:0042802">
    <property type="term" value="F:identical protein binding"/>
    <property type="evidence" value="ECO:0000353"/>
    <property type="project" value="IntAct"/>
</dbReference>
<dbReference type="GO" id="GO:0008270">
    <property type="term" value="F:zinc ion binding"/>
    <property type="evidence" value="ECO:0007669"/>
    <property type="project" value="InterPro"/>
</dbReference>
<dbReference type="GO" id="GO:0015977">
    <property type="term" value="P:carbon fixation"/>
    <property type="evidence" value="ECO:0007669"/>
    <property type="project" value="UniProtKB-KW"/>
</dbReference>
<dbReference type="GO" id="GO:0015976">
    <property type="term" value="P:carbon utilization"/>
    <property type="evidence" value="ECO:0007669"/>
    <property type="project" value="InterPro"/>
</dbReference>
<dbReference type="GO" id="GO:0015979">
    <property type="term" value="P:photosynthesis"/>
    <property type="evidence" value="ECO:0007669"/>
    <property type="project" value="UniProtKB-KW"/>
</dbReference>
<dbReference type="CDD" id="cd00884">
    <property type="entry name" value="beta_CA_cladeB"/>
    <property type="match status" value="1"/>
</dbReference>
<dbReference type="FunFam" id="3.40.1050.10:FF:000003">
    <property type="entry name" value="Carbonic anhydrase"/>
    <property type="match status" value="1"/>
</dbReference>
<dbReference type="Gene3D" id="3.40.1050.10">
    <property type="entry name" value="Carbonic anhydrase"/>
    <property type="match status" value="1"/>
</dbReference>
<dbReference type="InterPro" id="IPR045066">
    <property type="entry name" value="Beta_CA_cladeB"/>
</dbReference>
<dbReference type="InterPro" id="IPR001765">
    <property type="entry name" value="Carbonic_anhydrase"/>
</dbReference>
<dbReference type="InterPro" id="IPR015892">
    <property type="entry name" value="Carbonic_anhydrase_CS"/>
</dbReference>
<dbReference type="InterPro" id="IPR036874">
    <property type="entry name" value="Carbonic_anhydrase_sf"/>
</dbReference>
<dbReference type="PANTHER" id="PTHR11002">
    <property type="entry name" value="CARBONIC ANHYDRASE"/>
    <property type="match status" value="1"/>
</dbReference>
<dbReference type="PANTHER" id="PTHR11002:SF76">
    <property type="entry name" value="CARBONIC ANHYDRASE"/>
    <property type="match status" value="1"/>
</dbReference>
<dbReference type="Pfam" id="PF00484">
    <property type="entry name" value="Pro_CA"/>
    <property type="match status" value="1"/>
</dbReference>
<dbReference type="SMART" id="SM00947">
    <property type="entry name" value="Pro_CA"/>
    <property type="match status" value="1"/>
</dbReference>
<dbReference type="SUPFAM" id="SSF53056">
    <property type="entry name" value="beta-carbonic anhydrase, cab"/>
    <property type="match status" value="1"/>
</dbReference>
<dbReference type="PROSITE" id="PS00704">
    <property type="entry name" value="PROK_CO2_ANHYDRASE_1"/>
    <property type="match status" value="1"/>
</dbReference>
<dbReference type="PROSITE" id="PS00705">
    <property type="entry name" value="PROK_CO2_ANHYDRASE_2"/>
    <property type="match status" value="1"/>
</dbReference>
<proteinExistence type="evidence at protein level"/>
<keyword id="KW-0002">3D-structure</keyword>
<keyword id="KW-1283">Bacterial microcompartment</keyword>
<keyword id="KW-0120">Carbon dioxide fixation</keyword>
<keyword id="KW-1282">Carboxysome</keyword>
<keyword id="KW-0456">Lyase</keyword>
<keyword id="KW-0479">Metal-binding</keyword>
<keyword id="KW-0602">Photosynthesis</keyword>
<keyword id="KW-1185">Reference proteome</keyword>
<keyword id="KW-0862">Zinc</keyword>
<comment type="function">
    <text evidence="2 3 5 6">Reversible hydration of carbon dioxide. Essential to photosynthetic carbon dioxide fixation, supplies CO(2) to RuBisCO (ribulose bisphosphate carboxylase, rbcL-rbcS) in the carboxysome.</text>
</comment>
<comment type="catalytic activity">
    <reaction evidence="3 5">
        <text>hydrogencarbonate + H(+) = CO2 + H2O</text>
        <dbReference type="Rhea" id="RHEA:10748"/>
        <dbReference type="ChEBI" id="CHEBI:15377"/>
        <dbReference type="ChEBI" id="CHEBI:15378"/>
        <dbReference type="ChEBI" id="CHEBI:16526"/>
        <dbReference type="ChEBI" id="CHEBI:17544"/>
        <dbReference type="EC" id="4.2.1.1"/>
    </reaction>
</comment>
<comment type="cofactor">
    <cofactor evidence="4 10">
        <name>Zn(2+)</name>
        <dbReference type="ChEBI" id="CHEBI:29105"/>
    </cofactor>
    <text evidence="4">Binds 1 zinc ion per monomer, a water molecule forms the fourth ligand.</text>
</comment>
<comment type="activity regulation">
    <text evidence="5">Inhibited by ethoxyzolamide.</text>
</comment>
<comment type="biophysicochemical properties">
    <kinetics>
        <text evidence="4">kcat is 3340 sec(-1) for full length enzyme at pH 7.5.</text>
    </kinetics>
</comment>
<comment type="subunit">
    <text evidence="3 4">A hexamer formed by a trimer of dimers. Interacts with the first 260 residues of CcmM; both the N-terminal 206 residues and the C-terminal tail contribute to CcmM binding (PubMed:27729545). Interacts with full-length and the N-terminal 249 residues of CcmM. A probable CcmM-CcaA-CcmN complex as well as a CcaA-RuBisCO-CcmM complex can also be isolated (PubMed:17993516).</text>
</comment>
<comment type="interaction">
    <interactant intactId="EBI-1622341">
        <id>Q54735</id>
    </interactant>
    <interactant intactId="EBI-1622341">
        <id>Q54735</id>
        <label>ccaA</label>
    </interactant>
    <organismsDiffer>false</organismsDiffer>
    <experiments>2</experiments>
</comment>
<comment type="interaction">
    <interactant intactId="EBI-1622341">
        <id>Q54735</id>
    </interactant>
    <interactant intactId="EBI-862848">
        <id>P72758</id>
        <label>ccmM</label>
    </interactant>
    <organismsDiffer>false</organismsDiffer>
    <experiments>6</experiments>
</comment>
<comment type="subcellular location">
    <subcellularLocation>
        <location evidence="2 3 5">Carboxysome</location>
    </subcellularLocation>
    <text evidence="3">This cyanobacterium makes beta-type carboxysomes. Associates with the shell portion of carboxysomes.</text>
</comment>
<comment type="domain">
    <text evidence="3 4">Dimerization, activity and interactions with CcmM requires all but the last 60 amino acids of the protein (PubMed:17993516). The C-terminal tail (about 55 residues) inhibits CA activity about 10-fold; it might attenuate activity before encapsulation in the carboxysome (PubMed:27729545).</text>
</comment>
<comment type="disruption phenotype">
    <text evidence="2">Cells do not grow in normal air but do grow on 5% CO(2), called a high-CO(2) requiring phenotype, HCR; even at high CO(2) levels photosynthesis is less effective. Carboxyomes appear wild-type and contain RuBisCO but no longer have a HCO(3)- to CO(2) interconversion activity. Light-dependent CO(2) transport into the cell is unchanged.</text>
</comment>
<comment type="similarity">
    <text evidence="9">Belongs to the beta-class carbonic anhydrase family.</text>
</comment>
<comment type="sequence caution" evidence="8">
    <conflict type="erroneous initiation">
        <sequence resource="EMBL-CDS" id="BAA18166"/>
    </conflict>
    <text>Truncated N-terminus.</text>
</comment>
<name>CYNT_SYNY3</name>